<gene>
    <name type="primary">CID3</name>
    <name type="ordered locus">At1g54170</name>
    <name type="ORF">F15I1.27</name>
</gene>
<organism>
    <name type="scientific">Arabidopsis thaliana</name>
    <name type="common">Mouse-ear cress</name>
    <dbReference type="NCBI Taxonomy" id="3702"/>
    <lineage>
        <taxon>Eukaryota</taxon>
        <taxon>Viridiplantae</taxon>
        <taxon>Streptophyta</taxon>
        <taxon>Embryophyta</taxon>
        <taxon>Tracheophyta</taxon>
        <taxon>Spermatophyta</taxon>
        <taxon>Magnoliopsida</taxon>
        <taxon>eudicotyledons</taxon>
        <taxon>Gunneridae</taxon>
        <taxon>Pentapetalae</taxon>
        <taxon>rosids</taxon>
        <taxon>malvids</taxon>
        <taxon>Brassicales</taxon>
        <taxon>Brassicaceae</taxon>
        <taxon>Camelineae</taxon>
        <taxon>Arabidopsis</taxon>
    </lineage>
</organism>
<dbReference type="EMBL" id="AC006577">
    <property type="protein sequence ID" value="AAD25791.1"/>
    <property type="status" value="ALT_SEQ"/>
    <property type="molecule type" value="Genomic_DNA"/>
</dbReference>
<dbReference type="EMBL" id="CP002684">
    <property type="protein sequence ID" value="AEE33057.1"/>
    <property type="molecule type" value="Genomic_DNA"/>
</dbReference>
<dbReference type="EMBL" id="AY136398">
    <property type="protein sequence ID" value="AAM97064.1"/>
    <property type="molecule type" value="mRNA"/>
</dbReference>
<dbReference type="EMBL" id="BT000204">
    <property type="protein sequence ID" value="AAN15523.1"/>
    <property type="molecule type" value="mRNA"/>
</dbReference>
<dbReference type="PIR" id="H96582">
    <property type="entry name" value="H96582"/>
</dbReference>
<dbReference type="RefSeq" id="NP_175819.1">
    <property type="nucleotide sequence ID" value="NM_104295.4"/>
</dbReference>
<dbReference type="SMR" id="Q8L793"/>
<dbReference type="BioGRID" id="27082">
    <property type="interactions" value="2"/>
</dbReference>
<dbReference type="FunCoup" id="Q8L793">
    <property type="interactions" value="1576"/>
</dbReference>
<dbReference type="IntAct" id="Q8L793">
    <property type="interactions" value="1"/>
</dbReference>
<dbReference type="STRING" id="3702.Q8L793"/>
<dbReference type="GlyGen" id="Q8L793">
    <property type="glycosylation" value="1 site, 1 O-linked glycan (1 site)"/>
</dbReference>
<dbReference type="iPTMnet" id="Q8L793"/>
<dbReference type="PaxDb" id="3702-AT1G54170.1"/>
<dbReference type="ProteomicsDB" id="246906"/>
<dbReference type="EnsemblPlants" id="AT1G54170.1">
    <property type="protein sequence ID" value="AT1G54170.1"/>
    <property type="gene ID" value="AT1G54170"/>
</dbReference>
<dbReference type="GeneID" id="841857"/>
<dbReference type="Gramene" id="AT1G54170.1">
    <property type="protein sequence ID" value="AT1G54170.1"/>
    <property type="gene ID" value="AT1G54170"/>
</dbReference>
<dbReference type="KEGG" id="ath:AT1G54170"/>
<dbReference type="Araport" id="AT1G54170"/>
<dbReference type="TAIR" id="AT1G54170">
    <property type="gene designation" value="CID3"/>
</dbReference>
<dbReference type="eggNOG" id="KOG2375">
    <property type="taxonomic scope" value="Eukaryota"/>
</dbReference>
<dbReference type="HOGENOM" id="CLU_022637_0_0_1"/>
<dbReference type="InParanoid" id="Q8L793"/>
<dbReference type="OMA" id="QPMVYNA"/>
<dbReference type="PhylomeDB" id="Q8L793"/>
<dbReference type="PRO" id="PR:Q8L793"/>
<dbReference type="Proteomes" id="UP000006548">
    <property type="component" value="Chromosome 1"/>
</dbReference>
<dbReference type="ExpressionAtlas" id="Q8L793">
    <property type="expression patterns" value="baseline and differential"/>
</dbReference>
<dbReference type="GO" id="GO:0005737">
    <property type="term" value="C:cytoplasm"/>
    <property type="evidence" value="ECO:0007669"/>
    <property type="project" value="UniProtKB-ARBA"/>
</dbReference>
<dbReference type="GO" id="GO:0003723">
    <property type="term" value="F:RNA binding"/>
    <property type="evidence" value="ECO:0007669"/>
    <property type="project" value="InterPro"/>
</dbReference>
<dbReference type="InterPro" id="IPR045117">
    <property type="entry name" value="ATXN2-like"/>
</dbReference>
<dbReference type="InterPro" id="IPR009604">
    <property type="entry name" value="LsmAD_domain"/>
</dbReference>
<dbReference type="InterPro" id="IPR009818">
    <property type="entry name" value="PAM2_motif"/>
</dbReference>
<dbReference type="InterPro" id="IPR047575">
    <property type="entry name" value="Sm"/>
</dbReference>
<dbReference type="InterPro" id="IPR025852">
    <property type="entry name" value="SM_dom_ATX"/>
</dbReference>
<dbReference type="PANTHER" id="PTHR12854">
    <property type="entry name" value="ATAXIN 2-RELATED"/>
    <property type="match status" value="1"/>
</dbReference>
<dbReference type="PANTHER" id="PTHR12854:SF7">
    <property type="entry name" value="ATAXIN-2 HOMOLOG"/>
    <property type="match status" value="1"/>
</dbReference>
<dbReference type="Pfam" id="PF06741">
    <property type="entry name" value="LsmAD"/>
    <property type="match status" value="1"/>
</dbReference>
<dbReference type="Pfam" id="PF07145">
    <property type="entry name" value="PAM2"/>
    <property type="match status" value="1"/>
</dbReference>
<dbReference type="Pfam" id="PF14438">
    <property type="entry name" value="SM-ATX"/>
    <property type="match status" value="1"/>
</dbReference>
<dbReference type="SMART" id="SM01272">
    <property type="entry name" value="LsmAD"/>
    <property type="match status" value="1"/>
</dbReference>
<dbReference type="PROSITE" id="PS52002">
    <property type="entry name" value="SM"/>
    <property type="match status" value="1"/>
</dbReference>
<proteinExistence type="evidence at transcript level"/>
<comment type="domain">
    <text>Contains a tandem repeat of a PAM2-like motif, which seems to be involved in the binding to the PABC/CTC domain of PAB proteins.</text>
</comment>
<comment type="sequence caution" evidence="3">
    <conflict type="erroneous gene model prediction">
        <sequence resource="EMBL-CDS" id="AAD25791"/>
    </conflict>
</comment>
<reference key="1">
    <citation type="journal article" date="2000" name="Nature">
        <title>Sequence and analysis of chromosome 1 of the plant Arabidopsis thaliana.</title>
        <authorList>
            <person name="Theologis A."/>
            <person name="Ecker J.R."/>
            <person name="Palm C.J."/>
            <person name="Federspiel N.A."/>
            <person name="Kaul S."/>
            <person name="White O."/>
            <person name="Alonso J."/>
            <person name="Altafi H."/>
            <person name="Araujo R."/>
            <person name="Bowman C.L."/>
            <person name="Brooks S.Y."/>
            <person name="Buehler E."/>
            <person name="Chan A."/>
            <person name="Chao Q."/>
            <person name="Chen H."/>
            <person name="Cheuk R.F."/>
            <person name="Chin C.W."/>
            <person name="Chung M.K."/>
            <person name="Conn L."/>
            <person name="Conway A.B."/>
            <person name="Conway A.R."/>
            <person name="Creasy T.H."/>
            <person name="Dewar K."/>
            <person name="Dunn P."/>
            <person name="Etgu P."/>
            <person name="Feldblyum T.V."/>
            <person name="Feng J.-D."/>
            <person name="Fong B."/>
            <person name="Fujii C.Y."/>
            <person name="Gill J.E."/>
            <person name="Goldsmith A.D."/>
            <person name="Haas B."/>
            <person name="Hansen N.F."/>
            <person name="Hughes B."/>
            <person name="Huizar L."/>
            <person name="Hunter J.L."/>
            <person name="Jenkins J."/>
            <person name="Johnson-Hopson C."/>
            <person name="Khan S."/>
            <person name="Khaykin E."/>
            <person name="Kim C.J."/>
            <person name="Koo H.L."/>
            <person name="Kremenetskaia I."/>
            <person name="Kurtz D.B."/>
            <person name="Kwan A."/>
            <person name="Lam B."/>
            <person name="Langin-Hooper S."/>
            <person name="Lee A."/>
            <person name="Lee J.M."/>
            <person name="Lenz C.A."/>
            <person name="Li J.H."/>
            <person name="Li Y.-P."/>
            <person name="Lin X."/>
            <person name="Liu S.X."/>
            <person name="Liu Z.A."/>
            <person name="Luros J.S."/>
            <person name="Maiti R."/>
            <person name="Marziali A."/>
            <person name="Militscher J."/>
            <person name="Miranda M."/>
            <person name="Nguyen M."/>
            <person name="Nierman W.C."/>
            <person name="Osborne B.I."/>
            <person name="Pai G."/>
            <person name="Peterson J."/>
            <person name="Pham P.K."/>
            <person name="Rizzo M."/>
            <person name="Rooney T."/>
            <person name="Rowley D."/>
            <person name="Sakano H."/>
            <person name="Salzberg S.L."/>
            <person name="Schwartz J.R."/>
            <person name="Shinn P."/>
            <person name="Southwick A.M."/>
            <person name="Sun H."/>
            <person name="Tallon L.J."/>
            <person name="Tambunga G."/>
            <person name="Toriumi M.J."/>
            <person name="Town C.D."/>
            <person name="Utterback T."/>
            <person name="Van Aken S."/>
            <person name="Vaysberg M."/>
            <person name="Vysotskaia V.S."/>
            <person name="Walker M."/>
            <person name="Wu D."/>
            <person name="Yu G."/>
            <person name="Fraser C.M."/>
            <person name="Venter J.C."/>
            <person name="Davis R.W."/>
        </authorList>
    </citation>
    <scope>NUCLEOTIDE SEQUENCE [LARGE SCALE GENOMIC DNA]</scope>
    <source>
        <strain>cv. Columbia</strain>
    </source>
</reference>
<reference key="2">
    <citation type="journal article" date="2017" name="Plant J.">
        <title>Araport11: a complete reannotation of the Arabidopsis thaliana reference genome.</title>
        <authorList>
            <person name="Cheng C.Y."/>
            <person name="Krishnakumar V."/>
            <person name="Chan A.P."/>
            <person name="Thibaud-Nissen F."/>
            <person name="Schobel S."/>
            <person name="Town C.D."/>
        </authorList>
    </citation>
    <scope>GENOME REANNOTATION</scope>
    <source>
        <strain>cv. Columbia</strain>
    </source>
</reference>
<reference key="3">
    <citation type="journal article" date="2003" name="Science">
        <title>Empirical analysis of transcriptional activity in the Arabidopsis genome.</title>
        <authorList>
            <person name="Yamada K."/>
            <person name="Lim J."/>
            <person name="Dale J.M."/>
            <person name="Chen H."/>
            <person name="Shinn P."/>
            <person name="Palm C.J."/>
            <person name="Southwick A.M."/>
            <person name="Wu H.C."/>
            <person name="Kim C.J."/>
            <person name="Nguyen M."/>
            <person name="Pham P.K."/>
            <person name="Cheuk R.F."/>
            <person name="Karlin-Newmann G."/>
            <person name="Liu S.X."/>
            <person name="Lam B."/>
            <person name="Sakano H."/>
            <person name="Wu T."/>
            <person name="Yu G."/>
            <person name="Miranda M."/>
            <person name="Quach H.L."/>
            <person name="Tripp M."/>
            <person name="Chang C.H."/>
            <person name="Lee J.M."/>
            <person name="Toriumi M.J."/>
            <person name="Chan M.M."/>
            <person name="Tang C.C."/>
            <person name="Onodera C.S."/>
            <person name="Deng J.M."/>
            <person name="Akiyama K."/>
            <person name="Ansari Y."/>
            <person name="Arakawa T."/>
            <person name="Banh J."/>
            <person name="Banno F."/>
            <person name="Bowser L."/>
            <person name="Brooks S.Y."/>
            <person name="Carninci P."/>
            <person name="Chao Q."/>
            <person name="Choy N."/>
            <person name="Enju A."/>
            <person name="Goldsmith A.D."/>
            <person name="Gurjal M."/>
            <person name="Hansen N.F."/>
            <person name="Hayashizaki Y."/>
            <person name="Johnson-Hopson C."/>
            <person name="Hsuan V.W."/>
            <person name="Iida K."/>
            <person name="Karnes M."/>
            <person name="Khan S."/>
            <person name="Koesema E."/>
            <person name="Ishida J."/>
            <person name="Jiang P.X."/>
            <person name="Jones T."/>
            <person name="Kawai J."/>
            <person name="Kamiya A."/>
            <person name="Meyers C."/>
            <person name="Nakajima M."/>
            <person name="Narusaka M."/>
            <person name="Seki M."/>
            <person name="Sakurai T."/>
            <person name="Satou M."/>
            <person name="Tamse R."/>
            <person name="Vaysberg M."/>
            <person name="Wallender E.K."/>
            <person name="Wong C."/>
            <person name="Yamamura Y."/>
            <person name="Yuan S."/>
            <person name="Shinozaki K."/>
            <person name="Davis R.W."/>
            <person name="Theologis A."/>
            <person name="Ecker J.R."/>
        </authorList>
    </citation>
    <scope>NUCLEOTIDE SEQUENCE [LARGE SCALE MRNA]</scope>
    <source>
        <strain>cv. Columbia</strain>
    </source>
</reference>
<reference key="4">
    <citation type="journal article" date="2005" name="Mol. Genet. Genomics">
        <title>Four distinct classes of proteins as interaction partners of the PABC domain of Arabidopsis thaliana Poly(A)-binding proteins.</title>
        <authorList>
            <person name="Bravo J."/>
            <person name="Aguilar-Henonin L."/>
            <person name="Olmedo G."/>
            <person name="Guzman P."/>
        </authorList>
    </citation>
    <scope>GENE FAMILY</scope>
    <scope>PAM2 MOTIF</scope>
</reference>
<name>CID3_ARATH</name>
<feature type="chain" id="PRO_0000428894" description="Polyadenylate-binding protein-interacting protein 3">
    <location>
        <begin position="1"/>
        <end position="587"/>
    </location>
</feature>
<feature type="domain" description="Sm" evidence="1">
    <location>
        <begin position="51"/>
        <end position="132"/>
    </location>
</feature>
<feature type="region of interest" description="Disordered" evidence="2">
    <location>
        <begin position="422"/>
        <end position="503"/>
    </location>
</feature>
<feature type="short sequence motif" description="PAM2-like 1; degenerate">
    <location>
        <begin position="467"/>
        <end position="475"/>
    </location>
</feature>
<feature type="short sequence motif" description="PAM2-like 2">
    <location>
        <begin position="476"/>
        <end position="486"/>
    </location>
</feature>
<feature type="compositionally biased region" description="Low complexity" evidence="2">
    <location>
        <begin position="431"/>
        <end position="464"/>
    </location>
</feature>
<feature type="compositionally biased region" description="Polar residues" evidence="2">
    <location>
        <begin position="486"/>
        <end position="498"/>
    </location>
</feature>
<evidence type="ECO:0000255" key="1">
    <source>
        <dbReference type="PROSITE-ProRule" id="PRU01346"/>
    </source>
</evidence>
<evidence type="ECO:0000256" key="2">
    <source>
        <dbReference type="SAM" id="MobiDB-lite"/>
    </source>
</evidence>
<evidence type="ECO:0000305" key="3"/>
<protein>
    <recommendedName>
        <fullName>Polyadenylate-binding protein-interacting protein 3</fullName>
        <shortName>PABP-interacting protein 3</shortName>
        <shortName>Poly(A)-binding protein-interacting protein 3</shortName>
    </recommendedName>
    <alternativeName>
        <fullName>PAM2-containing protein CID3</fullName>
    </alternativeName>
    <alternativeName>
        <fullName>Protein CTC-INTERACTING DOMAIN 3</fullName>
    </alternativeName>
</protein>
<sequence length="587" mass="65389">MKPVLHSGSSSNGFSHRRFEKEAWMNNAQPSVDNTENGWDAESVDTPSQKLLVYFTTCNIGHQVEVHLKNGSVYSGIFHAANVEKDFGIILKMACLIRDSRGTKSRTVSKPSSKLLKIPADELVQVIAKDLPLSSDSVSDSVQCEKPLELLTDSLISQFYNVDLERELKPWVPDEDVPDCSDLENVFDDPWKRGWNQFEVNKTLFGVTSTFDEELYTTKLERGPGTRELEEQALRIAREIVGENTRDIHVAEERGLQLSGKFDIDEETKYSSVCATNRFDDTCYEDDEEEEEDILLDCCNNLTFGDSSASDGKEPASTGKFYEDSWGDSLHLRSNKMVDQSWSNSNKHTRQLMSELPSKDFPVAGNNIRNESQLGEQRKSKFLGASLFKKPSEESVSGFEDAPPPVKPSFIDGRLGLLSDRAKSENSSGWPGSSISRNSENSAASSASNLPILSPSSSGSLSSEKSTLNPNAKEFKLNPNAKSFKPSPSATRPQSPQSPVFDGSFYYPPVPPMPGLHIRYGTGAAFPGQQHPMMYNNTTQLSPNQTYYSPNSPQYPQPMMVTQQRPILFMPPTPYQPEMPYKGRDSY</sequence>
<keyword id="KW-1185">Reference proteome</keyword>
<keyword id="KW-0677">Repeat</keyword>
<accession>Q8L793</accession>
<accession>Q9SYH5</accession>